<feature type="chain" id="PRO_0000203062" description="Mitochondrial import inner membrane translocase subunit TIM54">
    <location>
        <begin position="1"/>
        <end position="478"/>
    </location>
</feature>
<feature type="topological domain" description="Mitochondrial matrix" evidence="1">
    <location>
        <begin position="1"/>
        <end position="32"/>
    </location>
</feature>
<feature type="transmembrane region" description="Helical" evidence="1">
    <location>
        <begin position="33"/>
        <end position="49"/>
    </location>
</feature>
<feature type="topological domain" description="Mitochondrial intermembrane" evidence="1">
    <location>
        <begin position="50"/>
        <end position="478"/>
    </location>
</feature>
<feature type="region of interest" description="Disordered" evidence="2">
    <location>
        <begin position="152"/>
        <end position="171"/>
    </location>
</feature>
<keyword id="KW-0002">3D-structure</keyword>
<keyword id="KW-0472">Membrane</keyword>
<keyword id="KW-0496">Mitochondrion</keyword>
<keyword id="KW-0999">Mitochondrion inner membrane</keyword>
<keyword id="KW-0653">Protein transport</keyword>
<keyword id="KW-1185">Reference proteome</keyword>
<keyword id="KW-0811">Translocation</keyword>
<keyword id="KW-0812">Transmembrane</keyword>
<keyword id="KW-1133">Transmembrane helix</keyword>
<keyword id="KW-0813">Transport</keyword>
<sequence length="478" mass="54183">MSSESGKPIAKPIRKPGYTNPALKALGIPALRLPSRNWMIFWSVLTVSIGGIAYDKYKQRQILSHATDLVKPLAEESMEVDKVPRKITVFIAPPPNDYLESSLKVWRRYVKPVLYYAGLDYELVQEDRQGIIRTNVANRIRELRKEILASTDGQPVKEPNQTVAKPSGSSTSKISSLLPFNKIIQDPAEEDDSFDPEIGKKFKENFDWRNVIGIFYTMPKPKHIISEDALTKDPILSGGVICLGRGAYKEYIAGIHEGLLGPIEKTEKTGSTEPKMTGVVEANQIESKVSESGATELVDAEKETALEEAKVQDDLKVDEENSSEDSQKFLKPFISSDQYPDLQIASELQTPNGEFIRNPNTNIPLLINQPLLVIPIPNLIGFTTIPRRIHRFYQKRFYVEDVCSSVVNCVRQTRIRPFDIAKDIDLAKDEEKDWPQNWVKQGKEKNSEWTQELVCDPRITKHMFVYEKPPKEEPESDI</sequence>
<proteinExistence type="evidence at protein level"/>
<comment type="function">
    <text evidence="4 6 9">Essential component of the TIM22 complex, a complex that mediates the import and insertion of multi-pass transmembrane proteins into the mitochondrial inner membrane. The TIM22 complex forms a twin-pore translocase that uses the membrane potential as external driving force. Its precise function within the TIM22 complex is unclear.</text>
</comment>
<comment type="subunit">
    <text evidence="4 5 7">Component of the TIM22 complex, whose core is composed of TIM18, TIM22 and TIM54, associated with the peripheral proteins MRS5/TIM12 and the 70 kDa heterohexamer composed of TIM9 and TIM10 (or TIM8 and TIM13).</text>
</comment>
<comment type="subcellular location">
    <subcellularLocation>
        <location evidence="3 4 8 9">Mitochondrion inner membrane</location>
        <topology evidence="3 4 8 9">Single-pass membrane protein</topology>
    </subcellularLocation>
    <text>Import into inner membrane protein requires TOM70 function.</text>
</comment>
<comment type="similarity">
    <text evidence="10">Belongs to the TIM54 family.</text>
</comment>
<organism>
    <name type="scientific">Saccharomyces cerevisiae (strain ATCC 204508 / S288c)</name>
    <name type="common">Baker's yeast</name>
    <dbReference type="NCBI Taxonomy" id="559292"/>
    <lineage>
        <taxon>Eukaryota</taxon>
        <taxon>Fungi</taxon>
        <taxon>Dikarya</taxon>
        <taxon>Ascomycota</taxon>
        <taxon>Saccharomycotina</taxon>
        <taxon>Saccharomycetes</taxon>
        <taxon>Saccharomycetales</taxon>
        <taxon>Saccharomycetaceae</taxon>
        <taxon>Saccharomyces</taxon>
    </lineage>
</organism>
<accession>P47045</accession>
<accession>D6VWC8</accession>
<reference key="1">
    <citation type="journal article" date="1996" name="EMBO J.">
        <title>Complete nucleotide sequence of Saccharomyces cerevisiae chromosome X.</title>
        <authorList>
            <person name="Galibert F."/>
            <person name="Alexandraki D."/>
            <person name="Baur A."/>
            <person name="Boles E."/>
            <person name="Chalwatzis N."/>
            <person name="Chuat J.-C."/>
            <person name="Coster F."/>
            <person name="Cziepluch C."/>
            <person name="de Haan M."/>
            <person name="Domdey H."/>
            <person name="Durand P."/>
            <person name="Entian K.-D."/>
            <person name="Gatius M."/>
            <person name="Goffeau A."/>
            <person name="Grivell L.A."/>
            <person name="Hennemann A."/>
            <person name="Herbert C.J."/>
            <person name="Heumann K."/>
            <person name="Hilger F."/>
            <person name="Hollenberg C.P."/>
            <person name="Huang M.-E."/>
            <person name="Jacq C."/>
            <person name="Jauniaux J.-C."/>
            <person name="Katsoulou C."/>
            <person name="Kirchrath L."/>
            <person name="Kleine K."/>
            <person name="Kordes E."/>
            <person name="Koetter P."/>
            <person name="Liebl S."/>
            <person name="Louis E.J."/>
            <person name="Manus V."/>
            <person name="Mewes H.-W."/>
            <person name="Miosga T."/>
            <person name="Obermaier B."/>
            <person name="Perea J."/>
            <person name="Pohl T.M."/>
            <person name="Portetelle D."/>
            <person name="Pujol A."/>
            <person name="Purnelle B."/>
            <person name="Ramezani Rad M."/>
            <person name="Rasmussen S.W."/>
            <person name="Rose M."/>
            <person name="Rossau R."/>
            <person name="Schaaff-Gerstenschlaeger I."/>
            <person name="Smits P.H.M."/>
            <person name="Scarcez T."/>
            <person name="Soriano N."/>
            <person name="To Van D."/>
            <person name="Tzermia M."/>
            <person name="Van Broekhoven A."/>
            <person name="Vandenbol M."/>
            <person name="Wedler H."/>
            <person name="von Wettstein D."/>
            <person name="Wambutt R."/>
            <person name="Zagulski M."/>
            <person name="Zollner A."/>
            <person name="Karpfinger-Hartl L."/>
        </authorList>
    </citation>
    <scope>NUCLEOTIDE SEQUENCE [LARGE SCALE GENOMIC DNA]</scope>
    <source>
        <strain>ATCC 204508 / S288c</strain>
    </source>
</reference>
<reference key="2">
    <citation type="journal article" date="2014" name="G3 (Bethesda)">
        <title>The reference genome sequence of Saccharomyces cerevisiae: Then and now.</title>
        <authorList>
            <person name="Engel S.R."/>
            <person name="Dietrich F.S."/>
            <person name="Fisk D.G."/>
            <person name="Binkley G."/>
            <person name="Balakrishnan R."/>
            <person name="Costanzo M.C."/>
            <person name="Dwight S.S."/>
            <person name="Hitz B.C."/>
            <person name="Karra K."/>
            <person name="Nash R.S."/>
            <person name="Weng S."/>
            <person name="Wong E.D."/>
            <person name="Lloyd P."/>
            <person name="Skrzypek M.S."/>
            <person name="Miyasato S.R."/>
            <person name="Simison M."/>
            <person name="Cherry J.M."/>
        </authorList>
    </citation>
    <scope>GENOME REANNOTATION</scope>
    <source>
        <strain>ATCC 204508 / S288c</strain>
    </source>
</reference>
<reference key="3">
    <citation type="journal article" date="1997" name="J. Cell Biol.">
        <title>The Tim54p-Tim22p complex mediates insertion of proteins into the mitochondrial inner membrane.</title>
        <authorList>
            <person name="Kerscher O."/>
            <person name="Holder J."/>
            <person name="Srinivasan M."/>
            <person name="Leung R.S."/>
            <person name="Jensen R.E."/>
        </authorList>
    </citation>
    <scope>FUNCTION</scope>
    <scope>SUBCELLULAR LOCATION</scope>
    <scope>TOPOLOGY</scope>
    <scope>INTERACTION WITH TIM22</scope>
</reference>
<reference key="4">
    <citation type="journal article" date="1999" name="Mol. Biol. Cell">
        <title>Biogenesis of Tim proteins of the mitochondrial carrier import pathway: differential targeting mechanisms and crossing over with the main import pathway.</title>
        <authorList>
            <person name="Kurz M."/>
            <person name="Martin H."/>
            <person name="Rassow J."/>
            <person name="Pfanner N."/>
            <person name="Ryan M.T."/>
        </authorList>
    </citation>
    <scope>SUBCELLULAR LOCATION</scope>
</reference>
<reference key="5">
    <citation type="journal article" date="2000" name="Mol. Biol. Cell">
        <title>Tim18p is a new component of the Tim54p-Tim22p translocon in the mitochondrial inner membrane.</title>
        <authorList>
            <person name="Kerscher O."/>
            <person name="Sepuri N.B."/>
            <person name="Jensen R.E."/>
        </authorList>
    </citation>
    <scope>FUNCTION</scope>
    <scope>SUBCELLULAR LOCATION</scope>
    <scope>TOPOLOGY</scope>
    <scope>IDENTIFICATION IN THE TIM22 COMPLEX WITH TIM22 AND TIM18</scope>
</reference>
<reference key="6">
    <citation type="journal article" date="2000" name="Mol. Cell. Biol.">
        <title>Tim18p, a new subunit of the TIM22 complex that mediates insertion of imported proteins into the yeast mitochondrial inner membrane.</title>
        <authorList>
            <person name="Koehler C.M."/>
            <person name="Murphy M.P."/>
            <person name="Bally N.A."/>
            <person name="Leuenberger D."/>
            <person name="Oppliger W."/>
            <person name="Dolfini L."/>
            <person name="Junne T."/>
            <person name="Schatz G."/>
            <person name="Or E."/>
        </authorList>
    </citation>
    <scope>IDENTIFICATION BY MASS SPECTROMETRY</scope>
    <scope>IDENTIFICATION IN THE TIM22 COMPLEX WITH TIM12; TIM22 AND TIM18</scope>
</reference>
<reference key="7">
    <citation type="journal article" date="2002" name="Mol. Cell">
        <title>Tim22, the essential core of the mitochondrial protein insertion complex, forms a voltage-activated and signal-gated channel.</title>
        <authorList>
            <person name="Kovermann P."/>
            <person name="Truscott K.N."/>
            <person name="Guiard B."/>
            <person name="Rehling P."/>
            <person name="Sepuri N.B."/>
            <person name="Mueller H."/>
            <person name="Jensen R.E."/>
            <person name="Wagner R."/>
            <person name="Pfanner N."/>
        </authorList>
    </citation>
    <scope>FUNCTION</scope>
</reference>
<reference key="8">
    <citation type="journal article" date="2003" name="Nature">
        <title>Global analysis of protein localization in budding yeast.</title>
        <authorList>
            <person name="Huh W.-K."/>
            <person name="Falvo J.V."/>
            <person name="Gerke L.C."/>
            <person name="Carroll A.S."/>
            <person name="Howson R.W."/>
            <person name="Weissman J.S."/>
            <person name="O'Shea E.K."/>
        </authorList>
    </citation>
    <scope>SUBCELLULAR LOCATION [LARGE SCALE ANALYSIS]</scope>
</reference>
<reference key="9">
    <citation type="journal article" date="2003" name="Science">
        <title>Protein insertion into the mitochondrial inner membrane by a twin-pore translocase.</title>
        <authorList>
            <person name="Rehling P."/>
            <person name="Model K."/>
            <person name="Brandner K."/>
            <person name="Kovermann P."/>
            <person name="Sickmann A."/>
            <person name="Meyer H.E."/>
            <person name="Kuehlbrandt W."/>
            <person name="Wagner R."/>
            <person name="Truscott K.N."/>
            <person name="Pfanner N."/>
        </authorList>
    </citation>
    <scope>IDENTIFICATION IN THE TIM22 COMPLEX WITH TIM10; TIM12; TIM22 AND TIM54</scope>
</reference>
<reference key="10">
    <citation type="journal article" date="2003" name="Science">
        <authorList>
            <person name="Rehling P."/>
            <person name="Model K."/>
            <person name="Brandner K."/>
            <person name="Kovermann P."/>
            <person name="Sickmann A."/>
            <person name="Meyer H.E."/>
            <person name="Kuehlbrandt W."/>
            <person name="Wagner R."/>
            <person name="Truscott K.N."/>
            <person name="Pfanner N."/>
        </authorList>
    </citation>
    <scope>ERRATUM OF PUBMED:12637749</scope>
</reference>
<reference key="11">
    <citation type="journal article" date="2012" name="Proc. Natl. Acad. Sci. U.S.A.">
        <title>N-terminal acetylome analyses and functional insights of the N-terminal acetyltransferase NatB.</title>
        <authorList>
            <person name="Van Damme P."/>
            <person name="Lasa M."/>
            <person name="Polevoda B."/>
            <person name="Gazquez C."/>
            <person name="Elosegui-Artola A."/>
            <person name="Kim D.S."/>
            <person name="De Juan-Pardo E."/>
            <person name="Demeyer K."/>
            <person name="Hole K."/>
            <person name="Larrea E."/>
            <person name="Timmerman E."/>
            <person name="Prieto J."/>
            <person name="Arnesen T."/>
            <person name="Sherman F."/>
            <person name="Gevaert K."/>
            <person name="Aldabe R."/>
        </authorList>
    </citation>
    <scope>IDENTIFICATION BY MASS SPECTROMETRY [LARGE SCALE ANALYSIS]</scope>
</reference>
<dbReference type="EMBL" id="Z49329">
    <property type="protein sequence ID" value="CAA89345.1"/>
    <property type="molecule type" value="Genomic_DNA"/>
</dbReference>
<dbReference type="EMBL" id="BK006943">
    <property type="protein sequence ID" value="DAA08744.1"/>
    <property type="molecule type" value="Genomic_DNA"/>
</dbReference>
<dbReference type="PIR" id="S56826">
    <property type="entry name" value="S56826"/>
</dbReference>
<dbReference type="RefSeq" id="NP_012481.3">
    <property type="nucleotide sequence ID" value="NM_001181487.3"/>
</dbReference>
<dbReference type="PDB" id="6LO8">
    <property type="method" value="EM"/>
    <property type="resolution" value="3.83 A"/>
    <property type="chains" value="B=1-478"/>
</dbReference>
<dbReference type="PDBsum" id="6LO8"/>
<dbReference type="EMDB" id="EMD-0935"/>
<dbReference type="SMR" id="P47045"/>
<dbReference type="BioGRID" id="33700">
    <property type="interactions" value="288"/>
</dbReference>
<dbReference type="ComplexPortal" id="CPX-1629">
    <property type="entry name" value="TIM22 mitochondrial inner membrane twin-pore carrier translocase complex"/>
</dbReference>
<dbReference type="DIP" id="DIP-5898N"/>
<dbReference type="FunCoup" id="P47045">
    <property type="interactions" value="37"/>
</dbReference>
<dbReference type="IntAct" id="P47045">
    <property type="interactions" value="16"/>
</dbReference>
<dbReference type="STRING" id="4932.YJL054W"/>
<dbReference type="TCDB" id="3.A.8.1.1">
    <property type="family name" value="the mitochondrial protein translocase (mpt) family"/>
</dbReference>
<dbReference type="iPTMnet" id="P47045"/>
<dbReference type="PaxDb" id="4932-YJL054W"/>
<dbReference type="PeptideAtlas" id="P47045"/>
<dbReference type="EnsemblFungi" id="YJL054W_mRNA">
    <property type="protein sequence ID" value="YJL054W"/>
    <property type="gene ID" value="YJL054W"/>
</dbReference>
<dbReference type="GeneID" id="853392"/>
<dbReference type="KEGG" id="sce:YJL054W"/>
<dbReference type="AGR" id="SGD:S000003590"/>
<dbReference type="SGD" id="S000003590">
    <property type="gene designation" value="TIM54"/>
</dbReference>
<dbReference type="VEuPathDB" id="FungiDB:YJL054W"/>
<dbReference type="eggNOG" id="ENOG502QPMQ">
    <property type="taxonomic scope" value="Eukaryota"/>
</dbReference>
<dbReference type="HOGENOM" id="CLU_039097_0_0_1"/>
<dbReference type="InParanoid" id="P47045"/>
<dbReference type="OMA" id="RNWMIFF"/>
<dbReference type="OrthoDB" id="5598305at2759"/>
<dbReference type="BioCyc" id="YEAST:G3O-31517-MONOMER"/>
<dbReference type="Reactome" id="R-SCE-1483206">
    <property type="pathway name" value="Glycerophospholipid biosynthesis"/>
</dbReference>
<dbReference type="Reactome" id="R-SCE-1660661">
    <property type="pathway name" value="Sphingolipid de novo biosynthesis"/>
</dbReference>
<dbReference type="BioGRID-ORCS" id="853392">
    <property type="hits" value="4 hits in 10 CRISPR screens"/>
</dbReference>
<dbReference type="PRO" id="PR:P47045"/>
<dbReference type="Proteomes" id="UP000002311">
    <property type="component" value="Chromosome X"/>
</dbReference>
<dbReference type="RNAct" id="P47045">
    <property type="molecule type" value="protein"/>
</dbReference>
<dbReference type="GO" id="GO:0005737">
    <property type="term" value="C:cytoplasm"/>
    <property type="evidence" value="ECO:0000318"/>
    <property type="project" value="GO_Central"/>
</dbReference>
<dbReference type="GO" id="GO:0005829">
    <property type="term" value="C:cytosol"/>
    <property type="evidence" value="ECO:0000304"/>
    <property type="project" value="Reactome"/>
</dbReference>
<dbReference type="GO" id="GO:0043231">
    <property type="term" value="C:intracellular membrane-bounded organelle"/>
    <property type="evidence" value="ECO:0000318"/>
    <property type="project" value="GO_Central"/>
</dbReference>
<dbReference type="GO" id="GO:0016020">
    <property type="term" value="C:membrane"/>
    <property type="evidence" value="ECO:0000318"/>
    <property type="project" value="GO_Central"/>
</dbReference>
<dbReference type="GO" id="GO:0005743">
    <property type="term" value="C:mitochondrial inner membrane"/>
    <property type="evidence" value="ECO:0000314"/>
    <property type="project" value="ComplexPortal"/>
</dbReference>
<dbReference type="GO" id="GO:0005758">
    <property type="term" value="C:mitochondrial intermembrane space"/>
    <property type="evidence" value="ECO:0000304"/>
    <property type="project" value="Reactome"/>
</dbReference>
<dbReference type="GO" id="GO:0005739">
    <property type="term" value="C:mitochondrion"/>
    <property type="evidence" value="ECO:0007005"/>
    <property type="project" value="SGD"/>
</dbReference>
<dbReference type="GO" id="GO:0042721">
    <property type="term" value="C:TIM22 mitochondrial import inner membrane insertion complex"/>
    <property type="evidence" value="ECO:0000314"/>
    <property type="project" value="SGD"/>
</dbReference>
<dbReference type="GO" id="GO:0045039">
    <property type="term" value="P:protein insertion into mitochondrial inner membrane"/>
    <property type="evidence" value="ECO:0000314"/>
    <property type="project" value="ComplexPortal"/>
</dbReference>
<dbReference type="GO" id="GO:0071806">
    <property type="term" value="P:protein transmembrane transport"/>
    <property type="evidence" value="ECO:0007669"/>
    <property type="project" value="GOC"/>
</dbReference>
<dbReference type="InterPro" id="IPR050187">
    <property type="entry name" value="Lipid_Phosphate_FormReg"/>
</dbReference>
<dbReference type="InterPro" id="IPR021056">
    <property type="entry name" value="Mt_import_IM_translocase_Tim54"/>
</dbReference>
<dbReference type="PANTHER" id="PTHR12358:SF101">
    <property type="entry name" value="MITOCHONDRIAL IMPORT INNER MEMBRANE TRANSLOCASE SUBUNIT TIM54"/>
    <property type="match status" value="1"/>
</dbReference>
<dbReference type="PANTHER" id="PTHR12358">
    <property type="entry name" value="SPHINGOSINE KINASE"/>
    <property type="match status" value="1"/>
</dbReference>
<dbReference type="Pfam" id="PF11711">
    <property type="entry name" value="Tim54"/>
    <property type="match status" value="1"/>
</dbReference>
<protein>
    <recommendedName>
        <fullName>Mitochondrial import inner membrane translocase subunit TIM54</fullName>
    </recommendedName>
</protein>
<name>TIM54_YEAST</name>
<evidence type="ECO:0000255" key="1"/>
<evidence type="ECO:0000256" key="2">
    <source>
        <dbReference type="SAM" id="MobiDB-lite"/>
    </source>
</evidence>
<evidence type="ECO:0000269" key="3">
    <source>
    </source>
</evidence>
<evidence type="ECO:0000269" key="4">
    <source>
    </source>
</evidence>
<evidence type="ECO:0000269" key="5">
    <source>
    </source>
</evidence>
<evidence type="ECO:0000269" key="6">
    <source>
    </source>
</evidence>
<evidence type="ECO:0000269" key="7">
    <source>
    </source>
</evidence>
<evidence type="ECO:0000269" key="8">
    <source>
    </source>
</evidence>
<evidence type="ECO:0000269" key="9">
    <source>
    </source>
</evidence>
<evidence type="ECO:0000305" key="10"/>
<gene>
    <name type="primary">TIM54</name>
    <name type="ordered locus">YJL054W</name>
    <name type="ORF">J1150</name>
</gene>